<dbReference type="EC" id="3.4.21.88" evidence="1"/>
<dbReference type="EMBL" id="CP001322">
    <property type="protein sequence ID" value="ACL04366.1"/>
    <property type="molecule type" value="Genomic_DNA"/>
</dbReference>
<dbReference type="RefSeq" id="WP_015947436.1">
    <property type="nucleotide sequence ID" value="NC_011768.1"/>
</dbReference>
<dbReference type="SMR" id="B8FIX5"/>
<dbReference type="MEROPS" id="S24.001"/>
<dbReference type="KEGG" id="dal:Dalk_2674"/>
<dbReference type="eggNOG" id="COG1974">
    <property type="taxonomic scope" value="Bacteria"/>
</dbReference>
<dbReference type="HOGENOM" id="CLU_066192_45_1_7"/>
<dbReference type="Proteomes" id="UP000000739">
    <property type="component" value="Chromosome"/>
</dbReference>
<dbReference type="GO" id="GO:0003677">
    <property type="term" value="F:DNA binding"/>
    <property type="evidence" value="ECO:0007669"/>
    <property type="project" value="UniProtKB-UniRule"/>
</dbReference>
<dbReference type="GO" id="GO:0004252">
    <property type="term" value="F:serine-type endopeptidase activity"/>
    <property type="evidence" value="ECO:0007669"/>
    <property type="project" value="UniProtKB-UniRule"/>
</dbReference>
<dbReference type="GO" id="GO:0006281">
    <property type="term" value="P:DNA repair"/>
    <property type="evidence" value="ECO:0007669"/>
    <property type="project" value="UniProtKB-UniRule"/>
</dbReference>
<dbReference type="GO" id="GO:0006260">
    <property type="term" value="P:DNA replication"/>
    <property type="evidence" value="ECO:0007669"/>
    <property type="project" value="UniProtKB-UniRule"/>
</dbReference>
<dbReference type="GO" id="GO:0045892">
    <property type="term" value="P:negative regulation of DNA-templated transcription"/>
    <property type="evidence" value="ECO:0007669"/>
    <property type="project" value="UniProtKB-UniRule"/>
</dbReference>
<dbReference type="GO" id="GO:0006508">
    <property type="term" value="P:proteolysis"/>
    <property type="evidence" value="ECO:0007669"/>
    <property type="project" value="InterPro"/>
</dbReference>
<dbReference type="GO" id="GO:0009432">
    <property type="term" value="P:SOS response"/>
    <property type="evidence" value="ECO:0007669"/>
    <property type="project" value="UniProtKB-UniRule"/>
</dbReference>
<dbReference type="CDD" id="cd00090">
    <property type="entry name" value="HTH_ARSR"/>
    <property type="match status" value="1"/>
</dbReference>
<dbReference type="CDD" id="cd06529">
    <property type="entry name" value="S24_LexA-like"/>
    <property type="match status" value="1"/>
</dbReference>
<dbReference type="FunFam" id="1.10.10.10:FF:000009">
    <property type="entry name" value="LexA repressor"/>
    <property type="match status" value="1"/>
</dbReference>
<dbReference type="FunFam" id="2.10.109.10:FF:000001">
    <property type="entry name" value="LexA repressor"/>
    <property type="match status" value="1"/>
</dbReference>
<dbReference type="Gene3D" id="2.10.109.10">
    <property type="entry name" value="Umud Fragment, subunit A"/>
    <property type="match status" value="1"/>
</dbReference>
<dbReference type="Gene3D" id="1.10.10.10">
    <property type="entry name" value="Winged helix-like DNA-binding domain superfamily/Winged helix DNA-binding domain"/>
    <property type="match status" value="1"/>
</dbReference>
<dbReference type="HAMAP" id="MF_00015">
    <property type="entry name" value="LexA"/>
    <property type="match status" value="1"/>
</dbReference>
<dbReference type="InterPro" id="IPR011991">
    <property type="entry name" value="ArsR-like_HTH"/>
</dbReference>
<dbReference type="InterPro" id="IPR006200">
    <property type="entry name" value="LexA"/>
</dbReference>
<dbReference type="InterPro" id="IPR039418">
    <property type="entry name" value="LexA-like"/>
</dbReference>
<dbReference type="InterPro" id="IPR036286">
    <property type="entry name" value="LexA/Signal_pep-like_sf"/>
</dbReference>
<dbReference type="InterPro" id="IPR006199">
    <property type="entry name" value="LexA_DNA-bd_dom"/>
</dbReference>
<dbReference type="InterPro" id="IPR050077">
    <property type="entry name" value="LexA_repressor"/>
</dbReference>
<dbReference type="InterPro" id="IPR006197">
    <property type="entry name" value="Peptidase_S24_LexA"/>
</dbReference>
<dbReference type="InterPro" id="IPR015927">
    <property type="entry name" value="Peptidase_S24_S26A/B/C"/>
</dbReference>
<dbReference type="InterPro" id="IPR036388">
    <property type="entry name" value="WH-like_DNA-bd_sf"/>
</dbReference>
<dbReference type="InterPro" id="IPR036390">
    <property type="entry name" value="WH_DNA-bd_sf"/>
</dbReference>
<dbReference type="NCBIfam" id="TIGR00498">
    <property type="entry name" value="lexA"/>
    <property type="match status" value="1"/>
</dbReference>
<dbReference type="PANTHER" id="PTHR33516">
    <property type="entry name" value="LEXA REPRESSOR"/>
    <property type="match status" value="1"/>
</dbReference>
<dbReference type="PANTHER" id="PTHR33516:SF2">
    <property type="entry name" value="LEXA REPRESSOR-RELATED"/>
    <property type="match status" value="1"/>
</dbReference>
<dbReference type="Pfam" id="PF01726">
    <property type="entry name" value="LexA_DNA_bind"/>
    <property type="match status" value="1"/>
</dbReference>
<dbReference type="Pfam" id="PF00717">
    <property type="entry name" value="Peptidase_S24"/>
    <property type="match status" value="1"/>
</dbReference>
<dbReference type="PRINTS" id="PR00726">
    <property type="entry name" value="LEXASERPTASE"/>
</dbReference>
<dbReference type="SUPFAM" id="SSF51306">
    <property type="entry name" value="LexA/Signal peptidase"/>
    <property type="match status" value="1"/>
</dbReference>
<dbReference type="SUPFAM" id="SSF46785">
    <property type="entry name" value="Winged helix' DNA-binding domain"/>
    <property type="match status" value="1"/>
</dbReference>
<keyword id="KW-0068">Autocatalytic cleavage</keyword>
<keyword id="KW-0227">DNA damage</keyword>
<keyword id="KW-0234">DNA repair</keyword>
<keyword id="KW-0235">DNA replication</keyword>
<keyword id="KW-0238">DNA-binding</keyword>
<keyword id="KW-0378">Hydrolase</keyword>
<keyword id="KW-1185">Reference proteome</keyword>
<keyword id="KW-0678">Repressor</keyword>
<keyword id="KW-0742">SOS response</keyword>
<keyword id="KW-0804">Transcription</keyword>
<keyword id="KW-0805">Transcription regulation</keyword>
<gene>
    <name evidence="1" type="primary">lexA</name>
    <name type="ordered locus">Dalk_2674</name>
</gene>
<accession>B8FIX5</accession>
<name>LEXA_DESAL</name>
<sequence length="203" mass="22404">MEDLTEKQSLVFEFIMEYTADHGYPPTVRELCDELGFKSPNTAHFHLKGLKDKGYIQSAKGKNRGITVLKTPPGAGGKIPLVGRIAAGAPILAVENVMDTLDVDRAFFGSSDAFSVRVEGDSMIEAHIEDGDYVVIKPTATPRNGDIVAALVNDEVTLKYFHRDGSRIELRPANVRYKPFCYTEEDFIDVRVLGVMAGLIRKV</sequence>
<evidence type="ECO:0000255" key="1">
    <source>
        <dbReference type="HAMAP-Rule" id="MF_00015"/>
    </source>
</evidence>
<proteinExistence type="inferred from homology"/>
<protein>
    <recommendedName>
        <fullName evidence="1">LexA repressor</fullName>
        <ecNumber evidence="1">3.4.21.88</ecNumber>
    </recommendedName>
</protein>
<organism>
    <name type="scientific">Desulfatibacillum aliphaticivorans</name>
    <dbReference type="NCBI Taxonomy" id="218208"/>
    <lineage>
        <taxon>Bacteria</taxon>
        <taxon>Pseudomonadati</taxon>
        <taxon>Thermodesulfobacteriota</taxon>
        <taxon>Desulfobacteria</taxon>
        <taxon>Desulfobacterales</taxon>
        <taxon>Desulfatibacillaceae</taxon>
        <taxon>Desulfatibacillum</taxon>
    </lineage>
</organism>
<comment type="function">
    <text evidence="1">Represses a number of genes involved in the response to DNA damage (SOS response), including recA and lexA. In the presence of single-stranded DNA, RecA interacts with LexA causing an autocatalytic cleavage which disrupts the DNA-binding part of LexA, leading to derepression of the SOS regulon and eventually DNA repair.</text>
</comment>
<comment type="catalytic activity">
    <reaction evidence="1">
        <text>Hydrolysis of Ala-|-Gly bond in repressor LexA.</text>
        <dbReference type="EC" id="3.4.21.88"/>
    </reaction>
</comment>
<comment type="subunit">
    <text evidence="1">Homodimer.</text>
</comment>
<comment type="similarity">
    <text evidence="1">Belongs to the peptidase S24 family.</text>
</comment>
<reference key="1">
    <citation type="journal article" date="2012" name="Environ. Microbiol.">
        <title>The genome sequence of Desulfatibacillum alkenivorans AK-01: a blueprint for anaerobic alkane oxidation.</title>
        <authorList>
            <person name="Callaghan A.V."/>
            <person name="Morris B.E."/>
            <person name="Pereira I.A."/>
            <person name="McInerney M.J."/>
            <person name="Austin R.N."/>
            <person name="Groves J.T."/>
            <person name="Kukor J.J."/>
            <person name="Suflita J.M."/>
            <person name="Young L.Y."/>
            <person name="Zylstra G.J."/>
            <person name="Wawrik B."/>
        </authorList>
    </citation>
    <scope>NUCLEOTIDE SEQUENCE [LARGE SCALE GENOMIC DNA]</scope>
    <source>
        <strain>AK-01</strain>
    </source>
</reference>
<feature type="chain" id="PRO_1000201818" description="LexA repressor">
    <location>
        <begin position="1"/>
        <end position="203"/>
    </location>
</feature>
<feature type="DNA-binding region" description="H-T-H motif" evidence="1">
    <location>
        <begin position="28"/>
        <end position="48"/>
    </location>
</feature>
<feature type="active site" description="For autocatalytic cleavage activity" evidence="1">
    <location>
        <position position="122"/>
    </location>
</feature>
<feature type="active site" description="For autocatalytic cleavage activity" evidence="1">
    <location>
        <position position="159"/>
    </location>
</feature>
<feature type="site" description="Cleavage; by autolysis" evidence="1">
    <location>
        <begin position="87"/>
        <end position="88"/>
    </location>
</feature>